<proteinExistence type="inferred from homology"/>
<reference key="1">
    <citation type="submission" date="2006-06" db="EMBL/GenBank/DDBJ databases">
        <title>Complete sequence of chromosome of Mesorhizobium sp. BNC1.</title>
        <authorList>
            <consortium name="US DOE Joint Genome Institute"/>
            <person name="Copeland A."/>
            <person name="Lucas S."/>
            <person name="Lapidus A."/>
            <person name="Barry K."/>
            <person name="Detter J.C."/>
            <person name="Glavina del Rio T."/>
            <person name="Hammon N."/>
            <person name="Israni S."/>
            <person name="Dalin E."/>
            <person name="Tice H."/>
            <person name="Pitluck S."/>
            <person name="Chertkov O."/>
            <person name="Brettin T."/>
            <person name="Bruce D."/>
            <person name="Han C."/>
            <person name="Tapia R."/>
            <person name="Gilna P."/>
            <person name="Schmutz J."/>
            <person name="Larimer F."/>
            <person name="Land M."/>
            <person name="Hauser L."/>
            <person name="Kyrpides N."/>
            <person name="Mikhailova N."/>
            <person name="Richardson P."/>
        </authorList>
    </citation>
    <scope>NUCLEOTIDE SEQUENCE [LARGE SCALE GENOMIC DNA]</scope>
    <source>
        <strain>BNC1</strain>
    </source>
</reference>
<comment type="function">
    <text evidence="1">Binds 16S rRNA, required for the assembly of 30S particles and may also be responsible for determining the conformation of the 16S rRNA at the A site.</text>
</comment>
<comment type="subunit">
    <text evidence="1">Part of the 30S ribosomal subunit. Contacts proteins S3 and S10.</text>
</comment>
<comment type="similarity">
    <text evidence="1">Belongs to the universal ribosomal protein uS14 family.</text>
</comment>
<protein>
    <recommendedName>
        <fullName evidence="1">Small ribosomal subunit protein uS14</fullName>
    </recommendedName>
    <alternativeName>
        <fullName evidence="2">30S ribosomal protein S14</fullName>
    </alternativeName>
</protein>
<name>RS14_CHESB</name>
<keyword id="KW-0687">Ribonucleoprotein</keyword>
<keyword id="KW-0689">Ribosomal protein</keyword>
<keyword id="KW-0694">RNA-binding</keyword>
<keyword id="KW-0699">rRNA-binding</keyword>
<accession>Q11HR5</accession>
<feature type="chain" id="PRO_1000128443" description="Small ribosomal subunit protein uS14">
    <location>
        <begin position="1"/>
        <end position="101"/>
    </location>
</feature>
<sequence>MAKTSAVEKNNRRRKMADRYANKRAALKAIVMDQGKPMEERFKAQLQLAALPRNSSKTRIRNRCEVTGRPRAFYRKLKMSRIALRELGSQGLIPGLVKSSW</sequence>
<organism>
    <name type="scientific">Chelativorans sp. (strain BNC1)</name>
    <dbReference type="NCBI Taxonomy" id="266779"/>
    <lineage>
        <taxon>Bacteria</taxon>
        <taxon>Pseudomonadati</taxon>
        <taxon>Pseudomonadota</taxon>
        <taxon>Alphaproteobacteria</taxon>
        <taxon>Hyphomicrobiales</taxon>
        <taxon>Phyllobacteriaceae</taxon>
        <taxon>Chelativorans</taxon>
    </lineage>
</organism>
<evidence type="ECO:0000255" key="1">
    <source>
        <dbReference type="HAMAP-Rule" id="MF_00537"/>
    </source>
</evidence>
<evidence type="ECO:0000305" key="2"/>
<gene>
    <name evidence="1" type="primary">rpsN</name>
    <name type="ordered locus">Meso_1665</name>
</gene>
<dbReference type="EMBL" id="CP000390">
    <property type="protein sequence ID" value="ABG63060.1"/>
    <property type="molecule type" value="Genomic_DNA"/>
</dbReference>
<dbReference type="SMR" id="Q11HR5"/>
<dbReference type="STRING" id="266779.Meso_1665"/>
<dbReference type="KEGG" id="mes:Meso_1665"/>
<dbReference type="eggNOG" id="COG0199">
    <property type="taxonomic scope" value="Bacteria"/>
</dbReference>
<dbReference type="HOGENOM" id="CLU_139869_0_1_5"/>
<dbReference type="OrthoDB" id="9810484at2"/>
<dbReference type="GO" id="GO:0005737">
    <property type="term" value="C:cytoplasm"/>
    <property type="evidence" value="ECO:0007669"/>
    <property type="project" value="UniProtKB-ARBA"/>
</dbReference>
<dbReference type="GO" id="GO:0015935">
    <property type="term" value="C:small ribosomal subunit"/>
    <property type="evidence" value="ECO:0007669"/>
    <property type="project" value="TreeGrafter"/>
</dbReference>
<dbReference type="GO" id="GO:0019843">
    <property type="term" value="F:rRNA binding"/>
    <property type="evidence" value="ECO:0007669"/>
    <property type="project" value="UniProtKB-UniRule"/>
</dbReference>
<dbReference type="GO" id="GO:0003735">
    <property type="term" value="F:structural constituent of ribosome"/>
    <property type="evidence" value="ECO:0007669"/>
    <property type="project" value="InterPro"/>
</dbReference>
<dbReference type="GO" id="GO:0006412">
    <property type="term" value="P:translation"/>
    <property type="evidence" value="ECO:0007669"/>
    <property type="project" value="UniProtKB-UniRule"/>
</dbReference>
<dbReference type="FunFam" id="1.10.287.1480:FF:000001">
    <property type="entry name" value="30S ribosomal protein S14"/>
    <property type="match status" value="1"/>
</dbReference>
<dbReference type="Gene3D" id="1.10.287.1480">
    <property type="match status" value="1"/>
</dbReference>
<dbReference type="HAMAP" id="MF_00537">
    <property type="entry name" value="Ribosomal_uS14_1"/>
    <property type="match status" value="1"/>
</dbReference>
<dbReference type="InterPro" id="IPR001209">
    <property type="entry name" value="Ribosomal_uS14"/>
</dbReference>
<dbReference type="InterPro" id="IPR023036">
    <property type="entry name" value="Ribosomal_uS14_bac/plastid"/>
</dbReference>
<dbReference type="InterPro" id="IPR018271">
    <property type="entry name" value="Ribosomal_uS14_CS"/>
</dbReference>
<dbReference type="NCBIfam" id="NF006477">
    <property type="entry name" value="PRK08881.1"/>
    <property type="match status" value="1"/>
</dbReference>
<dbReference type="PANTHER" id="PTHR19836">
    <property type="entry name" value="30S RIBOSOMAL PROTEIN S14"/>
    <property type="match status" value="1"/>
</dbReference>
<dbReference type="PANTHER" id="PTHR19836:SF19">
    <property type="entry name" value="SMALL RIBOSOMAL SUBUNIT PROTEIN US14M"/>
    <property type="match status" value="1"/>
</dbReference>
<dbReference type="Pfam" id="PF00253">
    <property type="entry name" value="Ribosomal_S14"/>
    <property type="match status" value="1"/>
</dbReference>
<dbReference type="SUPFAM" id="SSF57716">
    <property type="entry name" value="Glucocorticoid receptor-like (DNA-binding domain)"/>
    <property type="match status" value="1"/>
</dbReference>
<dbReference type="PROSITE" id="PS00527">
    <property type="entry name" value="RIBOSOMAL_S14"/>
    <property type="match status" value="1"/>
</dbReference>